<comment type="function">
    <text evidence="1">Aspartyl-tRNA synthetase with relaxed tRNA specificity since it is able to aspartylate not only its cognate tRNA(Asp) but also tRNA(Asn). Reaction proceeds in two steps: L-aspartate is first activated by ATP to form Asp-AMP and then transferred to the acceptor end of tRNA(Asp/Asn).</text>
</comment>
<comment type="catalytic activity">
    <reaction evidence="1">
        <text>tRNA(Asx) + L-aspartate + ATP = L-aspartyl-tRNA(Asx) + AMP + diphosphate</text>
        <dbReference type="Rhea" id="RHEA:18349"/>
        <dbReference type="Rhea" id="RHEA-COMP:9710"/>
        <dbReference type="Rhea" id="RHEA-COMP:9711"/>
        <dbReference type="ChEBI" id="CHEBI:29991"/>
        <dbReference type="ChEBI" id="CHEBI:30616"/>
        <dbReference type="ChEBI" id="CHEBI:33019"/>
        <dbReference type="ChEBI" id="CHEBI:78442"/>
        <dbReference type="ChEBI" id="CHEBI:78516"/>
        <dbReference type="ChEBI" id="CHEBI:456215"/>
        <dbReference type="EC" id="6.1.1.23"/>
    </reaction>
</comment>
<comment type="subunit">
    <text evidence="1">Homodimer.</text>
</comment>
<comment type="subcellular location">
    <subcellularLocation>
        <location evidence="1">Cytoplasm</location>
    </subcellularLocation>
</comment>
<comment type="similarity">
    <text evidence="1">Belongs to the class-II aminoacyl-tRNA synthetase family. Type 1 subfamily.</text>
</comment>
<dbReference type="EC" id="6.1.1.23" evidence="1"/>
<dbReference type="EMBL" id="CP001034">
    <property type="protein sequence ID" value="ACB84875.1"/>
    <property type="molecule type" value="Genomic_DNA"/>
</dbReference>
<dbReference type="RefSeq" id="WP_012447750.1">
    <property type="nucleotide sequence ID" value="NC_010718.1"/>
</dbReference>
<dbReference type="SMR" id="B2A2G0"/>
<dbReference type="FunCoup" id="B2A2G0">
    <property type="interactions" value="431"/>
</dbReference>
<dbReference type="STRING" id="457570.Nther_1292"/>
<dbReference type="KEGG" id="nth:Nther_1292"/>
<dbReference type="eggNOG" id="COG0173">
    <property type="taxonomic scope" value="Bacteria"/>
</dbReference>
<dbReference type="HOGENOM" id="CLU_014330_3_2_9"/>
<dbReference type="InParanoid" id="B2A2G0"/>
<dbReference type="OrthoDB" id="9802326at2"/>
<dbReference type="Proteomes" id="UP000001683">
    <property type="component" value="Chromosome"/>
</dbReference>
<dbReference type="GO" id="GO:0005737">
    <property type="term" value="C:cytoplasm"/>
    <property type="evidence" value="ECO:0007669"/>
    <property type="project" value="UniProtKB-SubCell"/>
</dbReference>
<dbReference type="GO" id="GO:0004815">
    <property type="term" value="F:aspartate-tRNA ligase activity"/>
    <property type="evidence" value="ECO:0007669"/>
    <property type="project" value="UniProtKB-UniRule"/>
</dbReference>
<dbReference type="GO" id="GO:0050560">
    <property type="term" value="F:aspartate-tRNA(Asn) ligase activity"/>
    <property type="evidence" value="ECO:0007669"/>
    <property type="project" value="UniProtKB-EC"/>
</dbReference>
<dbReference type="GO" id="GO:0005524">
    <property type="term" value="F:ATP binding"/>
    <property type="evidence" value="ECO:0007669"/>
    <property type="project" value="UniProtKB-UniRule"/>
</dbReference>
<dbReference type="GO" id="GO:0140096">
    <property type="term" value="F:catalytic activity, acting on a protein"/>
    <property type="evidence" value="ECO:0007669"/>
    <property type="project" value="UniProtKB-ARBA"/>
</dbReference>
<dbReference type="GO" id="GO:0003676">
    <property type="term" value="F:nucleic acid binding"/>
    <property type="evidence" value="ECO:0007669"/>
    <property type="project" value="InterPro"/>
</dbReference>
<dbReference type="GO" id="GO:0016740">
    <property type="term" value="F:transferase activity"/>
    <property type="evidence" value="ECO:0007669"/>
    <property type="project" value="UniProtKB-ARBA"/>
</dbReference>
<dbReference type="GO" id="GO:0006422">
    <property type="term" value="P:aspartyl-tRNA aminoacylation"/>
    <property type="evidence" value="ECO:0007669"/>
    <property type="project" value="UniProtKB-UniRule"/>
</dbReference>
<dbReference type="CDD" id="cd00777">
    <property type="entry name" value="AspRS_core"/>
    <property type="match status" value="1"/>
</dbReference>
<dbReference type="CDD" id="cd04317">
    <property type="entry name" value="EcAspRS_like_N"/>
    <property type="match status" value="1"/>
</dbReference>
<dbReference type="Gene3D" id="3.30.930.10">
    <property type="entry name" value="Bira Bifunctional Protein, Domain 2"/>
    <property type="match status" value="1"/>
</dbReference>
<dbReference type="Gene3D" id="3.30.1360.30">
    <property type="entry name" value="GAD-like domain"/>
    <property type="match status" value="1"/>
</dbReference>
<dbReference type="Gene3D" id="2.40.50.140">
    <property type="entry name" value="Nucleic acid-binding proteins"/>
    <property type="match status" value="1"/>
</dbReference>
<dbReference type="HAMAP" id="MF_00044">
    <property type="entry name" value="Asp_tRNA_synth_type1"/>
    <property type="match status" value="1"/>
</dbReference>
<dbReference type="InterPro" id="IPR004364">
    <property type="entry name" value="Aa-tRNA-synt_II"/>
</dbReference>
<dbReference type="InterPro" id="IPR006195">
    <property type="entry name" value="aa-tRNA-synth_II"/>
</dbReference>
<dbReference type="InterPro" id="IPR045864">
    <property type="entry name" value="aa-tRNA-synth_II/BPL/LPL"/>
</dbReference>
<dbReference type="InterPro" id="IPR004524">
    <property type="entry name" value="Asp-tRNA-ligase_1"/>
</dbReference>
<dbReference type="InterPro" id="IPR047089">
    <property type="entry name" value="Asp-tRNA-ligase_1_N"/>
</dbReference>
<dbReference type="InterPro" id="IPR002312">
    <property type="entry name" value="Asp/Asn-tRNA-synth_IIb"/>
</dbReference>
<dbReference type="InterPro" id="IPR047090">
    <property type="entry name" value="AspRS_core"/>
</dbReference>
<dbReference type="InterPro" id="IPR004115">
    <property type="entry name" value="GAD-like_sf"/>
</dbReference>
<dbReference type="InterPro" id="IPR029351">
    <property type="entry name" value="GAD_dom"/>
</dbReference>
<dbReference type="InterPro" id="IPR012340">
    <property type="entry name" value="NA-bd_OB-fold"/>
</dbReference>
<dbReference type="InterPro" id="IPR004365">
    <property type="entry name" value="NA-bd_OB_tRNA"/>
</dbReference>
<dbReference type="NCBIfam" id="TIGR00459">
    <property type="entry name" value="aspS_bact"/>
    <property type="match status" value="1"/>
</dbReference>
<dbReference type="NCBIfam" id="NF001750">
    <property type="entry name" value="PRK00476.1"/>
    <property type="match status" value="1"/>
</dbReference>
<dbReference type="PANTHER" id="PTHR22594:SF5">
    <property type="entry name" value="ASPARTATE--TRNA LIGASE, MITOCHONDRIAL"/>
    <property type="match status" value="1"/>
</dbReference>
<dbReference type="PANTHER" id="PTHR22594">
    <property type="entry name" value="ASPARTYL/LYSYL-TRNA SYNTHETASE"/>
    <property type="match status" value="1"/>
</dbReference>
<dbReference type="Pfam" id="PF02938">
    <property type="entry name" value="GAD"/>
    <property type="match status" value="1"/>
</dbReference>
<dbReference type="Pfam" id="PF00152">
    <property type="entry name" value="tRNA-synt_2"/>
    <property type="match status" value="1"/>
</dbReference>
<dbReference type="Pfam" id="PF01336">
    <property type="entry name" value="tRNA_anti-codon"/>
    <property type="match status" value="1"/>
</dbReference>
<dbReference type="PRINTS" id="PR01042">
    <property type="entry name" value="TRNASYNTHASP"/>
</dbReference>
<dbReference type="SUPFAM" id="SSF55681">
    <property type="entry name" value="Class II aaRS and biotin synthetases"/>
    <property type="match status" value="1"/>
</dbReference>
<dbReference type="SUPFAM" id="SSF55261">
    <property type="entry name" value="GAD domain-like"/>
    <property type="match status" value="1"/>
</dbReference>
<dbReference type="SUPFAM" id="SSF50249">
    <property type="entry name" value="Nucleic acid-binding proteins"/>
    <property type="match status" value="1"/>
</dbReference>
<dbReference type="PROSITE" id="PS50862">
    <property type="entry name" value="AA_TRNA_LIGASE_II"/>
    <property type="match status" value="1"/>
</dbReference>
<reference key="1">
    <citation type="submission" date="2008-04" db="EMBL/GenBank/DDBJ databases">
        <title>Complete sequence of chromosome of Natranaerobius thermophilus JW/NM-WN-LF.</title>
        <authorList>
            <consortium name="US DOE Joint Genome Institute"/>
            <person name="Copeland A."/>
            <person name="Lucas S."/>
            <person name="Lapidus A."/>
            <person name="Glavina del Rio T."/>
            <person name="Dalin E."/>
            <person name="Tice H."/>
            <person name="Bruce D."/>
            <person name="Goodwin L."/>
            <person name="Pitluck S."/>
            <person name="Chertkov O."/>
            <person name="Brettin T."/>
            <person name="Detter J.C."/>
            <person name="Han C."/>
            <person name="Kuske C.R."/>
            <person name="Schmutz J."/>
            <person name="Larimer F."/>
            <person name="Land M."/>
            <person name="Hauser L."/>
            <person name="Kyrpides N."/>
            <person name="Lykidis A."/>
            <person name="Mesbah N.M."/>
            <person name="Wiegel J."/>
        </authorList>
    </citation>
    <scope>NUCLEOTIDE SEQUENCE [LARGE SCALE GENOMIC DNA]</scope>
    <source>
        <strain>ATCC BAA-1301 / DSM 18059 / JW/NM-WN-LF</strain>
    </source>
</reference>
<sequence>MKRTHYCGELTRELVGKKVVLKGWADNRRDHGKLIFIDMRDNSGLVQVVCDFESNPEALEVADSVRSEYVLEITGTVRERSPENVNPDLKTGEIEVDCEDINVLNTSKTPPFFINENVDVDENIRLKYRYLDLRRPSMQNNIYLRHKITKLVRDFLDENGFIEVETPMLTKSTPEGARDFLVPSRLHEGSFYALPQSPQLFKQLLMASGVEKYFQIARCFRDEDLRADRQPEFSQIDIEMSFFEQEEFMKLMENMVSKLFKEVLGIELTKPFPRITYQEAMDRYGSDSPDLRYGLELHDVSDLVKDAEFKVFRETVASEGQVKGIAVPQGQEFSRKEIDDLTEFVKEFGAKGLAWMVLEEEEIKSPIAKFFSDEELDGIIDRMGANTGDLLLFVADEPEIVADSLSKLREHLANKLDLIPSNEYQLTWVIDFPLMEYDKDEGRYKALHHPFTSPYEDDLEKYENEPEKIRAKAYDLVLNGVEIGGGSMRIHQKELQEKMFEFLGIPLEEAKQKFGFLFEAFEYGTPPHGGIAFGLDRLVMLFTGSQSIRDVIAFPKTANASCLMTEAPAKVDENQLKELHLKTTK</sequence>
<evidence type="ECO:0000255" key="1">
    <source>
        <dbReference type="HAMAP-Rule" id="MF_00044"/>
    </source>
</evidence>
<name>SYDND_NATTJ</name>
<protein>
    <recommendedName>
        <fullName evidence="1">Aspartate--tRNA(Asp/Asn) ligase</fullName>
        <ecNumber evidence="1">6.1.1.23</ecNumber>
    </recommendedName>
    <alternativeName>
        <fullName evidence="1">Aspartyl-tRNA synthetase</fullName>
        <shortName evidence="1">AspRS</shortName>
    </alternativeName>
    <alternativeName>
        <fullName evidence="1">Non-discriminating aspartyl-tRNA synthetase</fullName>
        <shortName evidence="1">ND-AspRS</shortName>
    </alternativeName>
</protein>
<feature type="chain" id="PRO_1000091017" description="Aspartate--tRNA(Asp/Asn) ligase">
    <location>
        <begin position="1"/>
        <end position="585"/>
    </location>
</feature>
<feature type="region of interest" description="Aspartate" evidence="1">
    <location>
        <begin position="199"/>
        <end position="202"/>
    </location>
</feature>
<feature type="binding site" evidence="1">
    <location>
        <position position="175"/>
    </location>
    <ligand>
        <name>L-aspartate</name>
        <dbReference type="ChEBI" id="CHEBI:29991"/>
    </ligand>
</feature>
<feature type="binding site" evidence="1">
    <location>
        <begin position="221"/>
        <end position="223"/>
    </location>
    <ligand>
        <name>ATP</name>
        <dbReference type="ChEBI" id="CHEBI:30616"/>
    </ligand>
</feature>
<feature type="binding site" evidence="1">
    <location>
        <position position="221"/>
    </location>
    <ligand>
        <name>L-aspartate</name>
        <dbReference type="ChEBI" id="CHEBI:29991"/>
    </ligand>
</feature>
<feature type="binding site" evidence="1">
    <location>
        <position position="230"/>
    </location>
    <ligand>
        <name>ATP</name>
        <dbReference type="ChEBI" id="CHEBI:30616"/>
    </ligand>
</feature>
<feature type="binding site" evidence="1">
    <location>
        <position position="448"/>
    </location>
    <ligand>
        <name>L-aspartate</name>
        <dbReference type="ChEBI" id="CHEBI:29991"/>
    </ligand>
</feature>
<feature type="binding site" evidence="1">
    <location>
        <position position="482"/>
    </location>
    <ligand>
        <name>ATP</name>
        <dbReference type="ChEBI" id="CHEBI:30616"/>
    </ligand>
</feature>
<feature type="binding site" evidence="1">
    <location>
        <position position="489"/>
    </location>
    <ligand>
        <name>L-aspartate</name>
        <dbReference type="ChEBI" id="CHEBI:29991"/>
    </ligand>
</feature>
<feature type="binding site" evidence="1">
    <location>
        <begin position="534"/>
        <end position="537"/>
    </location>
    <ligand>
        <name>ATP</name>
        <dbReference type="ChEBI" id="CHEBI:30616"/>
    </ligand>
</feature>
<feature type="site" description="Important for tRNA non-discrimination" evidence="1">
    <location>
        <position position="31"/>
    </location>
</feature>
<accession>B2A2G0</accession>
<organism>
    <name type="scientific">Natranaerobius thermophilus (strain ATCC BAA-1301 / DSM 18059 / JW/NM-WN-LF)</name>
    <dbReference type="NCBI Taxonomy" id="457570"/>
    <lineage>
        <taxon>Bacteria</taxon>
        <taxon>Bacillati</taxon>
        <taxon>Bacillota</taxon>
        <taxon>Clostridia</taxon>
        <taxon>Natranaerobiales</taxon>
        <taxon>Natranaerobiaceae</taxon>
        <taxon>Natranaerobius</taxon>
    </lineage>
</organism>
<gene>
    <name evidence="1" type="primary">aspS</name>
    <name type="ordered locus">Nther_1292</name>
</gene>
<keyword id="KW-0030">Aminoacyl-tRNA synthetase</keyword>
<keyword id="KW-0067">ATP-binding</keyword>
<keyword id="KW-0963">Cytoplasm</keyword>
<keyword id="KW-0436">Ligase</keyword>
<keyword id="KW-0547">Nucleotide-binding</keyword>
<keyword id="KW-0648">Protein biosynthesis</keyword>
<keyword id="KW-1185">Reference proteome</keyword>
<proteinExistence type="inferred from homology"/>